<reference key="1">
    <citation type="submission" date="2007-09" db="EMBL/GenBank/DDBJ databases">
        <title>Complete sequence of chromosome of Serratia proteamaculans 568.</title>
        <authorList>
            <consortium name="US DOE Joint Genome Institute"/>
            <person name="Copeland A."/>
            <person name="Lucas S."/>
            <person name="Lapidus A."/>
            <person name="Barry K."/>
            <person name="Glavina del Rio T."/>
            <person name="Dalin E."/>
            <person name="Tice H."/>
            <person name="Pitluck S."/>
            <person name="Chain P."/>
            <person name="Malfatti S."/>
            <person name="Shin M."/>
            <person name="Vergez L."/>
            <person name="Schmutz J."/>
            <person name="Larimer F."/>
            <person name="Land M."/>
            <person name="Hauser L."/>
            <person name="Kyrpides N."/>
            <person name="Kim E."/>
            <person name="Taghavi S."/>
            <person name="Newman L."/>
            <person name="Vangronsveld J."/>
            <person name="van der Lelie D."/>
            <person name="Richardson P."/>
        </authorList>
    </citation>
    <scope>NUCLEOTIDE SEQUENCE [LARGE SCALE GENOMIC DNA]</scope>
    <source>
        <strain>568</strain>
    </source>
</reference>
<protein>
    <recommendedName>
        <fullName evidence="1">Cell division protein ZapD</fullName>
    </recommendedName>
    <alternativeName>
        <fullName evidence="1">Z ring-associated protein D</fullName>
    </alternativeName>
</protein>
<gene>
    <name evidence="1" type="primary">zapD</name>
    <name type="ordered locus">Spro_0773</name>
</gene>
<keyword id="KW-0131">Cell cycle</keyword>
<keyword id="KW-0132">Cell division</keyword>
<keyword id="KW-0963">Cytoplasm</keyword>
<keyword id="KW-0717">Septation</keyword>
<sequence length="250" mass="28698">MSDVSPSVLFEHPLNEKMRTWLRMEFLLQQLHGQRALSETAIALTFFRTVADLLDVLERGEVRTELLKELERQQQKLLAWADVPGVDMSLVDQLRNQLKQRGAALMSAPRLGQSLREDRLISLVRQRLSIPGGCCSFDLPTLHMWMHAPQQERDDDVANWQQTLEPLNQALTMVLDLIRQSGQFRNQISLNGFFQDNAEGADLLRLRINLAHQLYPQISGHKTRYAIRFLPLDSELGVVPERLTFELACC</sequence>
<accession>A8G9T9</accession>
<organism>
    <name type="scientific">Serratia proteamaculans (strain 568)</name>
    <dbReference type="NCBI Taxonomy" id="399741"/>
    <lineage>
        <taxon>Bacteria</taxon>
        <taxon>Pseudomonadati</taxon>
        <taxon>Pseudomonadota</taxon>
        <taxon>Gammaproteobacteria</taxon>
        <taxon>Enterobacterales</taxon>
        <taxon>Yersiniaceae</taxon>
        <taxon>Serratia</taxon>
    </lineage>
</organism>
<name>ZAPD_SERP5</name>
<comment type="function">
    <text evidence="1">Cell division factor that enhances FtsZ-ring assembly. Directly interacts with FtsZ and promotes bundling of FtsZ protofilaments, with a reduction in FtsZ GTPase activity.</text>
</comment>
<comment type="subunit">
    <text evidence="1">Interacts with FtsZ.</text>
</comment>
<comment type="subcellular location">
    <subcellularLocation>
        <location evidence="1">Cytoplasm</location>
    </subcellularLocation>
    <text evidence="1">Localizes to mid-cell in an FtsZ-dependent manner.</text>
</comment>
<comment type="similarity">
    <text evidence="1">Belongs to the ZapD family.</text>
</comment>
<proteinExistence type="inferred from homology"/>
<dbReference type="EMBL" id="CP000826">
    <property type="protein sequence ID" value="ABV39879.1"/>
    <property type="molecule type" value="Genomic_DNA"/>
</dbReference>
<dbReference type="SMR" id="A8G9T9"/>
<dbReference type="STRING" id="399741.Spro_0773"/>
<dbReference type="KEGG" id="spe:Spro_0773"/>
<dbReference type="eggNOG" id="COG4582">
    <property type="taxonomic scope" value="Bacteria"/>
</dbReference>
<dbReference type="HOGENOM" id="CLU_076303_0_0_6"/>
<dbReference type="OrthoDB" id="5294622at2"/>
<dbReference type="GO" id="GO:0032153">
    <property type="term" value="C:cell division site"/>
    <property type="evidence" value="ECO:0007669"/>
    <property type="project" value="TreeGrafter"/>
</dbReference>
<dbReference type="GO" id="GO:0005737">
    <property type="term" value="C:cytoplasm"/>
    <property type="evidence" value="ECO:0007669"/>
    <property type="project" value="UniProtKB-SubCell"/>
</dbReference>
<dbReference type="GO" id="GO:0000917">
    <property type="term" value="P:division septum assembly"/>
    <property type="evidence" value="ECO:0007669"/>
    <property type="project" value="UniProtKB-KW"/>
</dbReference>
<dbReference type="GO" id="GO:0043093">
    <property type="term" value="P:FtsZ-dependent cytokinesis"/>
    <property type="evidence" value="ECO:0007669"/>
    <property type="project" value="UniProtKB-UniRule"/>
</dbReference>
<dbReference type="FunFam" id="1.10.3900.10:FF:000001">
    <property type="entry name" value="Cell division protein ZapD"/>
    <property type="match status" value="1"/>
</dbReference>
<dbReference type="FunFam" id="2.60.440.10:FF:000001">
    <property type="entry name" value="Cell division protein ZapD"/>
    <property type="match status" value="1"/>
</dbReference>
<dbReference type="Gene3D" id="1.10.3900.10">
    <property type="entry name" value="YacF-like"/>
    <property type="match status" value="1"/>
</dbReference>
<dbReference type="Gene3D" id="2.60.440.10">
    <property type="entry name" value="YacF-like domains"/>
    <property type="match status" value="1"/>
</dbReference>
<dbReference type="HAMAP" id="MF_01092">
    <property type="entry name" value="ZapD"/>
    <property type="match status" value="1"/>
</dbReference>
<dbReference type="InterPro" id="IPR009777">
    <property type="entry name" value="ZapD"/>
</dbReference>
<dbReference type="InterPro" id="IPR027462">
    <property type="entry name" value="ZapD_C"/>
</dbReference>
<dbReference type="InterPro" id="IPR036268">
    <property type="entry name" value="ZapD_sf"/>
</dbReference>
<dbReference type="NCBIfam" id="NF003653">
    <property type="entry name" value="PRK05287.1-1"/>
    <property type="match status" value="1"/>
</dbReference>
<dbReference type="NCBIfam" id="NF003655">
    <property type="entry name" value="PRK05287.1-3"/>
    <property type="match status" value="1"/>
</dbReference>
<dbReference type="PANTHER" id="PTHR39455">
    <property type="entry name" value="CELL DIVISION PROTEIN ZAPD"/>
    <property type="match status" value="1"/>
</dbReference>
<dbReference type="PANTHER" id="PTHR39455:SF1">
    <property type="entry name" value="CELL DIVISION PROTEIN ZAPD"/>
    <property type="match status" value="1"/>
</dbReference>
<dbReference type="Pfam" id="PF07072">
    <property type="entry name" value="ZapD"/>
    <property type="match status" value="1"/>
</dbReference>
<dbReference type="SUPFAM" id="SSF160950">
    <property type="entry name" value="YacF-like"/>
    <property type="match status" value="1"/>
</dbReference>
<evidence type="ECO:0000255" key="1">
    <source>
        <dbReference type="HAMAP-Rule" id="MF_01092"/>
    </source>
</evidence>
<feature type="chain" id="PRO_1000064920" description="Cell division protein ZapD">
    <location>
        <begin position="1"/>
        <end position="250"/>
    </location>
</feature>